<accession>Q9JJ22</accession>
<accession>Q9JJ23</accession>
<name>ERAP1_RAT</name>
<dbReference type="EC" id="3.4.11.-"/>
<dbReference type="EMBL" id="AF148323">
    <property type="protein sequence ID" value="AAF73106.1"/>
    <property type="molecule type" value="mRNA"/>
</dbReference>
<dbReference type="EMBL" id="AF148324">
    <property type="protein sequence ID" value="AAF73107.1"/>
    <property type="molecule type" value="mRNA"/>
</dbReference>
<dbReference type="RefSeq" id="NP_110463.1">
    <property type="nucleotide sequence ID" value="NM_030836.1"/>
</dbReference>
<dbReference type="SMR" id="Q9JJ22"/>
<dbReference type="FunCoup" id="Q9JJ22">
    <property type="interactions" value="1308"/>
</dbReference>
<dbReference type="STRING" id="10116.ENSRNOP00000013625"/>
<dbReference type="MEROPS" id="M01.018"/>
<dbReference type="GlyCosmos" id="Q9JJ22">
    <property type="glycosylation" value="6 sites, No reported glycans"/>
</dbReference>
<dbReference type="GlyGen" id="Q9JJ22">
    <property type="glycosylation" value="7 sites"/>
</dbReference>
<dbReference type="iPTMnet" id="Q9JJ22"/>
<dbReference type="PhosphoSitePlus" id="Q9JJ22"/>
<dbReference type="jPOST" id="Q9JJ22"/>
<dbReference type="PaxDb" id="10116-ENSRNOP00000013625"/>
<dbReference type="PeptideAtlas" id="Q9JJ22"/>
<dbReference type="UCSC" id="RGD:708542">
    <molecule id="Q9JJ22-1"/>
    <property type="organism name" value="rat"/>
</dbReference>
<dbReference type="AGR" id="RGD:708542"/>
<dbReference type="RGD" id="708542">
    <property type="gene designation" value="Erap1"/>
</dbReference>
<dbReference type="eggNOG" id="KOG1046">
    <property type="taxonomic scope" value="Eukaryota"/>
</dbReference>
<dbReference type="InParanoid" id="Q9JJ22"/>
<dbReference type="PhylomeDB" id="Q9JJ22"/>
<dbReference type="Reactome" id="R-RNO-983170">
    <property type="pathway name" value="Antigen Presentation: Folding, assembly and peptide loading of class I MHC"/>
</dbReference>
<dbReference type="PRO" id="PR:Q9JJ22"/>
<dbReference type="Proteomes" id="UP000002494">
    <property type="component" value="Unplaced"/>
</dbReference>
<dbReference type="GO" id="GO:0005737">
    <property type="term" value="C:cytoplasm"/>
    <property type="evidence" value="ECO:0000266"/>
    <property type="project" value="RGD"/>
</dbReference>
<dbReference type="GO" id="GO:0005788">
    <property type="term" value="C:endoplasmic reticulum lumen"/>
    <property type="evidence" value="ECO:0000314"/>
    <property type="project" value="RGD"/>
</dbReference>
<dbReference type="GO" id="GO:0005789">
    <property type="term" value="C:endoplasmic reticulum membrane"/>
    <property type="evidence" value="ECO:0007669"/>
    <property type="project" value="UniProtKB-SubCell"/>
</dbReference>
<dbReference type="GO" id="GO:0005576">
    <property type="term" value="C:extracellular region"/>
    <property type="evidence" value="ECO:0000250"/>
    <property type="project" value="UniProtKB"/>
</dbReference>
<dbReference type="GO" id="GO:0005615">
    <property type="term" value="C:extracellular space"/>
    <property type="evidence" value="ECO:0000318"/>
    <property type="project" value="GO_Central"/>
</dbReference>
<dbReference type="GO" id="GO:0016020">
    <property type="term" value="C:membrane"/>
    <property type="evidence" value="ECO:0000318"/>
    <property type="project" value="GO_Central"/>
</dbReference>
<dbReference type="GO" id="GO:0004177">
    <property type="term" value="F:aminopeptidase activity"/>
    <property type="evidence" value="ECO:0000315"/>
    <property type="project" value="RGD"/>
</dbReference>
<dbReference type="GO" id="GO:0004175">
    <property type="term" value="F:endopeptidase activity"/>
    <property type="evidence" value="ECO:0000266"/>
    <property type="project" value="RGD"/>
</dbReference>
<dbReference type="GO" id="GO:0005138">
    <property type="term" value="F:interleukin-6 receptor binding"/>
    <property type="evidence" value="ECO:0000250"/>
    <property type="project" value="UniProtKB"/>
</dbReference>
<dbReference type="GO" id="GO:0070006">
    <property type="term" value="F:metalloaminopeptidase activity"/>
    <property type="evidence" value="ECO:0000318"/>
    <property type="project" value="GO_Central"/>
</dbReference>
<dbReference type="GO" id="GO:0008235">
    <property type="term" value="F:metalloexopeptidase activity"/>
    <property type="evidence" value="ECO:0000250"/>
    <property type="project" value="UniProtKB"/>
</dbReference>
<dbReference type="GO" id="GO:0008233">
    <property type="term" value="F:peptidase activity"/>
    <property type="evidence" value="ECO:0000266"/>
    <property type="project" value="RGD"/>
</dbReference>
<dbReference type="GO" id="GO:0042277">
    <property type="term" value="F:peptide binding"/>
    <property type="evidence" value="ECO:0000318"/>
    <property type="project" value="GO_Central"/>
</dbReference>
<dbReference type="GO" id="GO:0005164">
    <property type="term" value="F:tumor necrosis factor receptor binding"/>
    <property type="evidence" value="ECO:0000353"/>
    <property type="project" value="RGD"/>
</dbReference>
<dbReference type="GO" id="GO:0008270">
    <property type="term" value="F:zinc ion binding"/>
    <property type="evidence" value="ECO:0000315"/>
    <property type="project" value="RGD"/>
</dbReference>
<dbReference type="GO" id="GO:0002250">
    <property type="term" value="P:adaptive immune response"/>
    <property type="evidence" value="ECO:0007669"/>
    <property type="project" value="UniProtKB-KW"/>
</dbReference>
<dbReference type="GO" id="GO:0019882">
    <property type="term" value="P:antigen processing and presentation"/>
    <property type="evidence" value="ECO:0000304"/>
    <property type="project" value="RGD"/>
</dbReference>
<dbReference type="GO" id="GO:0006509">
    <property type="term" value="P:membrane protein ectodomain proteolysis"/>
    <property type="evidence" value="ECO:0000250"/>
    <property type="project" value="UniProtKB"/>
</dbReference>
<dbReference type="GO" id="GO:0043171">
    <property type="term" value="P:peptide catabolic process"/>
    <property type="evidence" value="ECO:0000318"/>
    <property type="project" value="GO_Central"/>
</dbReference>
<dbReference type="GO" id="GO:0045766">
    <property type="term" value="P:positive regulation of angiogenesis"/>
    <property type="evidence" value="ECO:0000266"/>
    <property type="project" value="RGD"/>
</dbReference>
<dbReference type="GO" id="GO:0030163">
    <property type="term" value="P:protein catabolic process"/>
    <property type="evidence" value="ECO:0000315"/>
    <property type="project" value="RGD"/>
</dbReference>
<dbReference type="GO" id="GO:0006508">
    <property type="term" value="P:proteolysis"/>
    <property type="evidence" value="ECO:0000266"/>
    <property type="project" value="RGD"/>
</dbReference>
<dbReference type="CDD" id="cd09601">
    <property type="entry name" value="M1_APN-Q_like"/>
    <property type="match status" value="1"/>
</dbReference>
<dbReference type="FunFam" id="1.10.390.10:FF:000007">
    <property type="entry name" value="Aminopeptidase"/>
    <property type="match status" value="1"/>
</dbReference>
<dbReference type="FunFam" id="1.25.50.20:FF:000003">
    <property type="entry name" value="Leucyl-cystinyl aminopeptidase"/>
    <property type="match status" value="1"/>
</dbReference>
<dbReference type="FunFam" id="2.60.40.1730:FF:000001">
    <property type="entry name" value="Leucyl-cystinyl aminopeptidase"/>
    <property type="match status" value="1"/>
</dbReference>
<dbReference type="FunFam" id="2.60.40.1910:FF:000001">
    <property type="entry name" value="Leucyl-cystinyl aminopeptidase"/>
    <property type="match status" value="1"/>
</dbReference>
<dbReference type="Gene3D" id="1.25.50.20">
    <property type="match status" value="1"/>
</dbReference>
<dbReference type="Gene3D" id="2.60.40.1910">
    <property type="match status" value="1"/>
</dbReference>
<dbReference type="Gene3D" id="1.10.390.10">
    <property type="entry name" value="Neutral Protease Domain 2"/>
    <property type="match status" value="1"/>
</dbReference>
<dbReference type="Gene3D" id="2.60.40.1730">
    <property type="entry name" value="tricorn interacting facor f3 domain"/>
    <property type="match status" value="1"/>
</dbReference>
<dbReference type="InterPro" id="IPR045357">
    <property type="entry name" value="Aminopeptidase_N-like_N"/>
</dbReference>
<dbReference type="InterPro" id="IPR042097">
    <property type="entry name" value="Aminopeptidase_N-like_N_sf"/>
</dbReference>
<dbReference type="InterPro" id="IPR024571">
    <property type="entry name" value="ERAP1-like_C_dom"/>
</dbReference>
<dbReference type="InterPro" id="IPR034016">
    <property type="entry name" value="M1_APN-typ"/>
</dbReference>
<dbReference type="InterPro" id="IPR001930">
    <property type="entry name" value="Peptidase_M1"/>
</dbReference>
<dbReference type="InterPro" id="IPR050344">
    <property type="entry name" value="Peptidase_M1_aminopeptidases"/>
</dbReference>
<dbReference type="InterPro" id="IPR014782">
    <property type="entry name" value="Peptidase_M1_dom"/>
</dbReference>
<dbReference type="InterPro" id="IPR027268">
    <property type="entry name" value="Peptidase_M4/M1_CTD_sf"/>
</dbReference>
<dbReference type="PANTHER" id="PTHR11533:SF156">
    <property type="entry name" value="ENDOPLASMIC RETICULUM AMINOPEPTIDASE 1"/>
    <property type="match status" value="1"/>
</dbReference>
<dbReference type="PANTHER" id="PTHR11533">
    <property type="entry name" value="PROTEASE M1 ZINC METALLOPROTEASE"/>
    <property type="match status" value="1"/>
</dbReference>
<dbReference type="Pfam" id="PF11838">
    <property type="entry name" value="ERAP1_C"/>
    <property type="match status" value="1"/>
</dbReference>
<dbReference type="Pfam" id="PF01433">
    <property type="entry name" value="Peptidase_M1"/>
    <property type="match status" value="1"/>
</dbReference>
<dbReference type="Pfam" id="PF17900">
    <property type="entry name" value="Peptidase_M1_N"/>
    <property type="match status" value="1"/>
</dbReference>
<dbReference type="PRINTS" id="PR00756">
    <property type="entry name" value="ALADIPTASE"/>
</dbReference>
<dbReference type="SUPFAM" id="SSF63737">
    <property type="entry name" value="Leukotriene A4 hydrolase N-terminal domain"/>
    <property type="match status" value="1"/>
</dbReference>
<dbReference type="SUPFAM" id="SSF55486">
    <property type="entry name" value="Metalloproteases ('zincins'), catalytic domain"/>
    <property type="match status" value="1"/>
</dbReference>
<dbReference type="PROSITE" id="PS00142">
    <property type="entry name" value="ZINC_PROTEASE"/>
    <property type="match status" value="1"/>
</dbReference>
<keyword id="KW-1064">Adaptive immunity</keyword>
<keyword id="KW-0025">Alternative splicing</keyword>
<keyword id="KW-0031">Aminopeptidase</keyword>
<keyword id="KW-1015">Disulfide bond</keyword>
<keyword id="KW-0256">Endoplasmic reticulum</keyword>
<keyword id="KW-0325">Glycoprotein</keyword>
<keyword id="KW-0378">Hydrolase</keyword>
<keyword id="KW-0391">Immunity</keyword>
<keyword id="KW-0472">Membrane</keyword>
<keyword id="KW-0479">Metal-binding</keyword>
<keyword id="KW-0482">Metalloprotease</keyword>
<keyword id="KW-0645">Protease</keyword>
<keyword id="KW-1185">Reference proteome</keyword>
<keyword id="KW-0735">Signal-anchor</keyword>
<keyword id="KW-0812">Transmembrane</keyword>
<keyword id="KW-1133">Transmembrane helix</keyword>
<keyword id="KW-0862">Zinc</keyword>
<comment type="function">
    <text evidence="1">Aminopeptidase that plays a central role in peptide trimming, a step required for the generation of most HLA class I-binding peptides. Peptide trimming is essential to customize longer precursor peptides to fit them to the correct length required for presentation on MHC class I molecules. Strongly prefers substrates 9-16 residues long. Rapidly degrades 13-mer to a 9-mer and then stops. Preferentially hydrolyzes the residue Leu and peptides with a hydrophobic C-terminus, while it has weak activity toward peptides with charged C-terminus. May play a role in the inactivation of peptide hormones. May be involved in the regulation of blood pressure through the inactivation of angiotensin II and/or the generation of bradykinin in the kidney (By similarity).</text>
</comment>
<comment type="cofactor">
    <cofactor evidence="1">
        <name>Zn(2+)</name>
        <dbReference type="ChEBI" id="CHEBI:29105"/>
    </cofactor>
    <text evidence="1">Binds 1 zinc ion per subunit.</text>
</comment>
<comment type="subunit">
    <text evidence="1">Monomer. May also exist as a heterodimer; with ERAP2. Interacts with RBMX (By similarity).</text>
</comment>
<comment type="subcellular location">
    <subcellularLocation>
        <location evidence="1">Endoplasmic reticulum membrane</location>
        <topology evidence="1">Single-pass type II membrane protein</topology>
    </subcellularLocation>
</comment>
<comment type="alternative products">
    <event type="alternative splicing"/>
    <isoform>
        <id>Q9JJ22-1</id>
        <name>1</name>
        <sequence type="displayed"/>
    </isoform>
    <isoform>
        <id>Q9JJ22-2</id>
        <name>2</name>
        <sequence type="described" ref="VSP_005451 VSP_005452"/>
    </isoform>
</comment>
<comment type="tissue specificity">
    <text evidence="4">Ubiquitous.</text>
</comment>
<comment type="PTM">
    <text evidence="1">N-glycosylated.</text>
</comment>
<comment type="similarity">
    <text evidence="6">Belongs to the peptidase M1 family.</text>
</comment>
<sequence>MPSLLSLVLTFLAVSSPSCCQNSDTASPKASNGASFPWNNMRLPEYITPIHYDLMIHANLSTLTFWGKTEVEITVSQPTSTIIMHSHQLQISKATLRRGAEEMLPEEPLKLMEYSAHEQVALLTAQPLLAGSVYTVIITYAANLSENFHGFYKSTYRTQEGERRILAATQFEPTAARMAFPCFDEPALKASFSIKIKRDPRHLAISNMPLVKSVTVAEGLIEDHFDITVKMSTYLVAFIISDFKSVSKMTKSGVKVSVYAVPDKINQADYALDAAVTLLEFYEDYFSIPYPLPKQDLAAIPDFQSGAMENWGLTTYRESALLYDKEKSSASSKLGITMTVSHELAHQWFGNLVTMEWWNDLWLNEGFAKFMEFVSVTVTHPELKVEEYFFGKCFNAMEVDALNSSHPVSTPVENPAQIREMFDEVSYEKGACILNMLRDYLSADTFKRGIVQYLQKYSYKNTKNEDLWNSMMHICPTDGTQTMDGFCSRNQHSSSTSHWRQEVIDIKSMMNTWTLQKGFPLITITVRGRNVHLKQEHYMKGSECFPETGSLWHVPLTFITSKSDSVQRFLLKTKTDVIILPEAVEWIKFNVGMNGYYIVHYGDDGWASLNGLLKEAHTTISSNDRASLINNAFQLVSIGKLSIEKALDLILYLKNETEIMPIFQGLNELIPMYKLMEKRDMVEVETQFKDFLLRLLKDLINKQTWTDEGSVSERMLRSQLLLLACVHRYQLCVQRAERYFREWKASNGNMSLPIDVTLAVFAVGAQNTEGWDFLYSKYQSSLSSTEKSQIEFSLCISQDPEKLQWLLDQSFKGEIIKTQEFPHILTLIGRNPVGYPLAWKFLKENWNKIVQKFELGSSSIAHMVMGTTNQFSTRARLEEVKGFFSSLKKNGSQLRCVQQTIETIEENIRWMDKNFDKIRLWLQKERQELL</sequence>
<organism>
    <name type="scientific">Rattus norvegicus</name>
    <name type="common">Rat</name>
    <dbReference type="NCBI Taxonomy" id="10116"/>
    <lineage>
        <taxon>Eukaryota</taxon>
        <taxon>Metazoa</taxon>
        <taxon>Chordata</taxon>
        <taxon>Craniata</taxon>
        <taxon>Vertebrata</taxon>
        <taxon>Euteleostomi</taxon>
        <taxon>Mammalia</taxon>
        <taxon>Eutheria</taxon>
        <taxon>Euarchontoglires</taxon>
        <taxon>Glires</taxon>
        <taxon>Rodentia</taxon>
        <taxon>Myomorpha</taxon>
        <taxon>Muroidea</taxon>
        <taxon>Muridae</taxon>
        <taxon>Murinae</taxon>
        <taxon>Rattus</taxon>
    </lineage>
</organism>
<proteinExistence type="evidence at transcript level"/>
<reference key="1">
    <citation type="journal article" date="2000" name="Eur. J. Biochem.">
        <title>Molecular characterization of a puromycin-insensitive leucyl-specific aminopeptidase, PILS-AP.</title>
        <authorList>
            <person name="Schomburg L."/>
            <person name="Kollmus H."/>
            <person name="Friedrichsen S."/>
            <person name="Bauer K."/>
        </authorList>
    </citation>
    <scope>NUCLEOTIDE SEQUENCE [MRNA] (ISOFORMS 1 AND 2)</scope>
    <scope>TISSUE SPECIFICITY</scope>
    <source>
        <strain>Sprague-Dawley</strain>
        <tissue>Pineal gland</tissue>
    </source>
</reference>
<protein>
    <recommendedName>
        <fullName>Endoplasmic reticulum aminopeptidase 1</fullName>
        <ecNumber>3.4.11.-</ecNumber>
    </recommendedName>
    <alternativeName>
        <fullName>ARTS-1</fullName>
    </alternativeName>
    <alternativeName>
        <fullName>Adipocyte-derived leucine aminopeptidase</fullName>
        <shortName>A-LAP</shortName>
    </alternativeName>
    <alternativeName>
        <fullName>Aminopeptidase PILS</fullName>
    </alternativeName>
    <alternativeName>
        <fullName>Puromycin-insensitive leucyl-specific aminopeptidase</fullName>
        <shortName>PILS-AP</shortName>
    </alternativeName>
</protein>
<gene>
    <name type="primary">Erap1</name>
    <name type="synonym">Appils</name>
    <name type="synonym">Arts1</name>
</gene>
<evidence type="ECO:0000250" key="1"/>
<evidence type="ECO:0000255" key="2"/>
<evidence type="ECO:0000255" key="3">
    <source>
        <dbReference type="PROSITE-ProRule" id="PRU10095"/>
    </source>
</evidence>
<evidence type="ECO:0000269" key="4">
    <source>
    </source>
</evidence>
<evidence type="ECO:0000303" key="5">
    <source>
    </source>
</evidence>
<evidence type="ECO:0000305" key="6"/>
<feature type="chain" id="PRO_0000026753" description="Endoplasmic reticulum aminopeptidase 1">
    <location>
        <begin position="1"/>
        <end position="930"/>
    </location>
</feature>
<feature type="topological domain" description="Cytoplasmic" evidence="2">
    <location>
        <begin position="1"/>
        <end position="2"/>
    </location>
</feature>
<feature type="transmembrane region" description="Helical; Signal-anchor for type II membrane protein" evidence="2">
    <location>
        <begin position="3"/>
        <end position="23"/>
    </location>
</feature>
<feature type="topological domain" description="Lumenal" evidence="2">
    <location>
        <begin position="24"/>
        <end position="930"/>
    </location>
</feature>
<feature type="active site" description="Proton acceptor" evidence="3">
    <location>
        <position position="343"/>
    </location>
</feature>
<feature type="binding site" evidence="1">
    <location>
        <position position="172"/>
    </location>
    <ligand>
        <name>substrate</name>
    </ligand>
</feature>
<feature type="binding site" evidence="1">
    <location>
        <begin position="306"/>
        <end position="310"/>
    </location>
    <ligand>
        <name>substrate</name>
    </ligand>
</feature>
<feature type="binding site" evidence="3">
    <location>
        <position position="342"/>
    </location>
    <ligand>
        <name>Zn(2+)</name>
        <dbReference type="ChEBI" id="CHEBI:29105"/>
        <note>catalytic</note>
    </ligand>
</feature>
<feature type="binding site" evidence="3">
    <location>
        <position position="346"/>
    </location>
    <ligand>
        <name>Zn(2+)</name>
        <dbReference type="ChEBI" id="CHEBI:29105"/>
        <note>catalytic</note>
    </ligand>
</feature>
<feature type="binding site" evidence="3">
    <location>
        <position position="365"/>
    </location>
    <ligand>
        <name>Zn(2+)</name>
        <dbReference type="ChEBI" id="CHEBI:29105"/>
        <note>catalytic</note>
    </ligand>
</feature>
<feature type="site" description="Transition state stabilizer" evidence="1">
    <location>
        <position position="427"/>
    </location>
</feature>
<feature type="glycosylation site" description="N-linked (GlcNAc...) asparagine" evidence="2">
    <location>
        <position position="59"/>
    </location>
</feature>
<feature type="glycosylation site" description="N-linked (GlcNAc...) asparagine" evidence="2">
    <location>
        <position position="143"/>
    </location>
</feature>
<feature type="glycosylation site" description="N-linked (GlcNAc...) asparagine" evidence="2">
    <location>
        <position position="403"/>
    </location>
</feature>
<feature type="glycosylation site" description="N-linked (GlcNAc...) asparagine" evidence="2">
    <location>
        <position position="655"/>
    </location>
</feature>
<feature type="glycosylation site" description="N-linked (GlcNAc...) asparagine" evidence="2">
    <location>
        <position position="749"/>
    </location>
</feature>
<feature type="glycosylation site" description="N-linked (GlcNAc...) asparagine" evidence="2">
    <location>
        <position position="890"/>
    </location>
</feature>
<feature type="disulfide bond" evidence="1">
    <location>
        <begin position="393"/>
        <end position="432"/>
    </location>
</feature>
<feature type="disulfide bond" evidence="1">
    <location>
        <begin position="725"/>
        <end position="732"/>
    </location>
</feature>
<feature type="splice variant" id="VSP_005451" description="In isoform 2." evidence="5">
    <original>FF</original>
    <variation>CM</variation>
    <location>
        <begin position="883"/>
        <end position="884"/>
    </location>
</feature>
<feature type="splice variant" id="VSP_005452" description="In isoform 2." evidence="5">
    <location>
        <begin position="885"/>
        <end position="930"/>
    </location>
</feature>